<dbReference type="EC" id="1.4.3.5" evidence="1"/>
<dbReference type="EMBL" id="CP001600">
    <property type="protein sequence ID" value="ACR69273.1"/>
    <property type="molecule type" value="Genomic_DNA"/>
</dbReference>
<dbReference type="RefSeq" id="WP_015871404.1">
    <property type="nucleotide sequence ID" value="NZ_CP169062.1"/>
</dbReference>
<dbReference type="SMR" id="C5BE32"/>
<dbReference type="STRING" id="67780.B6E78_03095"/>
<dbReference type="GeneID" id="69539026"/>
<dbReference type="KEGG" id="eic:NT01EI_2097"/>
<dbReference type="PATRIC" id="fig|634503.3.peg.1874"/>
<dbReference type="HOGENOM" id="CLU_032263_2_2_6"/>
<dbReference type="OrthoDB" id="9780392at2"/>
<dbReference type="UniPathway" id="UPA01068">
    <property type="reaction ID" value="UER00304"/>
</dbReference>
<dbReference type="UniPathway" id="UPA01068">
    <property type="reaction ID" value="UER00305"/>
</dbReference>
<dbReference type="Proteomes" id="UP000001485">
    <property type="component" value="Chromosome"/>
</dbReference>
<dbReference type="GO" id="GO:0010181">
    <property type="term" value="F:FMN binding"/>
    <property type="evidence" value="ECO:0007669"/>
    <property type="project" value="UniProtKB-UniRule"/>
</dbReference>
<dbReference type="GO" id="GO:0004733">
    <property type="term" value="F:pyridoxamine phosphate oxidase activity"/>
    <property type="evidence" value="ECO:0007669"/>
    <property type="project" value="UniProtKB-UniRule"/>
</dbReference>
<dbReference type="GO" id="GO:0008615">
    <property type="term" value="P:pyridoxine biosynthetic process"/>
    <property type="evidence" value="ECO:0007669"/>
    <property type="project" value="UniProtKB-KW"/>
</dbReference>
<dbReference type="FunFam" id="2.30.110.10:FF:000001">
    <property type="entry name" value="Pyridoxine/pyridoxamine 5'-phosphate oxidase"/>
    <property type="match status" value="1"/>
</dbReference>
<dbReference type="Gene3D" id="2.30.110.10">
    <property type="entry name" value="Electron Transport, Fmn-binding Protein, Chain A"/>
    <property type="match status" value="1"/>
</dbReference>
<dbReference type="HAMAP" id="MF_01629">
    <property type="entry name" value="PdxH"/>
    <property type="match status" value="1"/>
</dbReference>
<dbReference type="InterPro" id="IPR000659">
    <property type="entry name" value="Pyridox_Oxase"/>
</dbReference>
<dbReference type="InterPro" id="IPR019740">
    <property type="entry name" value="Pyridox_Oxase_CS"/>
</dbReference>
<dbReference type="InterPro" id="IPR011576">
    <property type="entry name" value="Pyridox_Oxase_N"/>
</dbReference>
<dbReference type="InterPro" id="IPR019576">
    <property type="entry name" value="Pyridoxamine_oxidase_dimer_C"/>
</dbReference>
<dbReference type="InterPro" id="IPR012349">
    <property type="entry name" value="Split_barrel_FMN-bd"/>
</dbReference>
<dbReference type="NCBIfam" id="TIGR00558">
    <property type="entry name" value="pdxH"/>
    <property type="match status" value="1"/>
</dbReference>
<dbReference type="NCBIfam" id="NF004231">
    <property type="entry name" value="PRK05679.1"/>
    <property type="match status" value="1"/>
</dbReference>
<dbReference type="PANTHER" id="PTHR10851:SF0">
    <property type="entry name" value="PYRIDOXINE-5'-PHOSPHATE OXIDASE"/>
    <property type="match status" value="1"/>
</dbReference>
<dbReference type="PANTHER" id="PTHR10851">
    <property type="entry name" value="PYRIDOXINE-5-PHOSPHATE OXIDASE"/>
    <property type="match status" value="1"/>
</dbReference>
<dbReference type="Pfam" id="PF10590">
    <property type="entry name" value="PNP_phzG_C"/>
    <property type="match status" value="1"/>
</dbReference>
<dbReference type="Pfam" id="PF01243">
    <property type="entry name" value="PNPOx_N"/>
    <property type="match status" value="1"/>
</dbReference>
<dbReference type="PIRSF" id="PIRSF000190">
    <property type="entry name" value="Pyd_amn-ph_oxd"/>
    <property type="match status" value="1"/>
</dbReference>
<dbReference type="SUPFAM" id="SSF50475">
    <property type="entry name" value="FMN-binding split barrel"/>
    <property type="match status" value="1"/>
</dbReference>
<dbReference type="PROSITE" id="PS01064">
    <property type="entry name" value="PYRIDOX_OXIDASE"/>
    <property type="match status" value="1"/>
</dbReference>
<protein>
    <recommendedName>
        <fullName evidence="1">Pyridoxine/pyridoxamine 5'-phosphate oxidase</fullName>
        <ecNumber evidence="1">1.4.3.5</ecNumber>
    </recommendedName>
    <alternativeName>
        <fullName evidence="1">PNP/PMP oxidase</fullName>
        <shortName evidence="1">PNPOx</shortName>
    </alternativeName>
    <alternativeName>
        <fullName evidence="1">Pyridoxal 5'-phosphate synthase</fullName>
    </alternativeName>
</protein>
<sequence length="217" mass="25342">MSENNEFDIADLRRDYVRGGLRRRDLTTNPLDLFERWLRQACDARLADPTAMCVATVDKSGQPHQRIVLLKHYDAQGMVFYTNLGSNKAQQLEENPRISLHFPWHMLDRQVSITGTAHRLTALEVMKYFHSRPKDSQIAAWVSHQSARISTRGILESKFLELKQKFLQGEIPLPSFWGGYRVSLETIEFWQGRESRLHDRFLYQRDGDGWQIDRLAP</sequence>
<proteinExistence type="inferred from homology"/>
<name>PDXH_EDWI9</name>
<organism>
    <name type="scientific">Edwardsiella ictaluri (strain 93-146)</name>
    <dbReference type="NCBI Taxonomy" id="634503"/>
    <lineage>
        <taxon>Bacteria</taxon>
        <taxon>Pseudomonadati</taxon>
        <taxon>Pseudomonadota</taxon>
        <taxon>Gammaproteobacteria</taxon>
        <taxon>Enterobacterales</taxon>
        <taxon>Hafniaceae</taxon>
        <taxon>Edwardsiella</taxon>
    </lineage>
</organism>
<reference key="1">
    <citation type="submission" date="2009-03" db="EMBL/GenBank/DDBJ databases">
        <title>Complete genome sequence of Edwardsiella ictaluri 93-146.</title>
        <authorList>
            <person name="Williams M.L."/>
            <person name="Gillaspy A.F."/>
            <person name="Dyer D.W."/>
            <person name="Thune R.L."/>
            <person name="Waldbieser G.C."/>
            <person name="Schuster S.C."/>
            <person name="Gipson J."/>
            <person name="Zaitshik J."/>
            <person name="Landry C."/>
            <person name="Lawrence M.L."/>
        </authorList>
    </citation>
    <scope>NUCLEOTIDE SEQUENCE [LARGE SCALE GENOMIC DNA]</scope>
    <source>
        <strain>93-146</strain>
    </source>
</reference>
<feature type="chain" id="PRO_1000215763" description="Pyridoxine/pyridoxamine 5'-phosphate oxidase">
    <location>
        <begin position="1"/>
        <end position="217"/>
    </location>
</feature>
<feature type="binding site" evidence="1">
    <location>
        <begin position="13"/>
        <end position="16"/>
    </location>
    <ligand>
        <name>substrate</name>
    </ligand>
</feature>
<feature type="binding site" evidence="1">
    <location>
        <begin position="66"/>
        <end position="71"/>
    </location>
    <ligand>
        <name>FMN</name>
        <dbReference type="ChEBI" id="CHEBI:58210"/>
    </ligand>
</feature>
<feature type="binding site" evidence="1">
    <location>
        <position position="71"/>
    </location>
    <ligand>
        <name>substrate</name>
    </ligand>
</feature>
<feature type="binding site" evidence="1">
    <location>
        <begin position="81"/>
        <end position="82"/>
    </location>
    <ligand>
        <name>FMN</name>
        <dbReference type="ChEBI" id="CHEBI:58210"/>
    </ligand>
</feature>
<feature type="binding site" evidence="1">
    <location>
        <position position="88"/>
    </location>
    <ligand>
        <name>FMN</name>
        <dbReference type="ChEBI" id="CHEBI:58210"/>
    </ligand>
</feature>
<feature type="binding site" evidence="1">
    <location>
        <position position="110"/>
    </location>
    <ligand>
        <name>FMN</name>
        <dbReference type="ChEBI" id="CHEBI:58210"/>
    </ligand>
</feature>
<feature type="binding site" evidence="1">
    <location>
        <position position="128"/>
    </location>
    <ligand>
        <name>substrate</name>
    </ligand>
</feature>
<feature type="binding site" evidence="1">
    <location>
        <position position="132"/>
    </location>
    <ligand>
        <name>substrate</name>
    </ligand>
</feature>
<feature type="binding site" evidence="1">
    <location>
        <position position="136"/>
    </location>
    <ligand>
        <name>substrate</name>
    </ligand>
</feature>
<feature type="binding site" evidence="1">
    <location>
        <begin position="145"/>
        <end position="146"/>
    </location>
    <ligand>
        <name>FMN</name>
        <dbReference type="ChEBI" id="CHEBI:58210"/>
    </ligand>
</feature>
<feature type="binding site" evidence="1">
    <location>
        <position position="190"/>
    </location>
    <ligand>
        <name>FMN</name>
        <dbReference type="ChEBI" id="CHEBI:58210"/>
    </ligand>
</feature>
<feature type="binding site" evidence="1">
    <location>
        <begin position="196"/>
        <end position="198"/>
    </location>
    <ligand>
        <name>substrate</name>
    </ligand>
</feature>
<feature type="binding site" evidence="1">
    <location>
        <position position="200"/>
    </location>
    <ligand>
        <name>FMN</name>
        <dbReference type="ChEBI" id="CHEBI:58210"/>
    </ligand>
</feature>
<comment type="function">
    <text evidence="1">Catalyzes the oxidation of either pyridoxine 5'-phosphate (PNP) or pyridoxamine 5'-phosphate (PMP) into pyridoxal 5'-phosphate (PLP).</text>
</comment>
<comment type="catalytic activity">
    <reaction evidence="1">
        <text>pyridoxamine 5'-phosphate + O2 + H2O = pyridoxal 5'-phosphate + H2O2 + NH4(+)</text>
        <dbReference type="Rhea" id="RHEA:15817"/>
        <dbReference type="ChEBI" id="CHEBI:15377"/>
        <dbReference type="ChEBI" id="CHEBI:15379"/>
        <dbReference type="ChEBI" id="CHEBI:16240"/>
        <dbReference type="ChEBI" id="CHEBI:28938"/>
        <dbReference type="ChEBI" id="CHEBI:58451"/>
        <dbReference type="ChEBI" id="CHEBI:597326"/>
        <dbReference type="EC" id="1.4.3.5"/>
    </reaction>
</comment>
<comment type="catalytic activity">
    <reaction evidence="1">
        <text>pyridoxine 5'-phosphate + O2 = pyridoxal 5'-phosphate + H2O2</text>
        <dbReference type="Rhea" id="RHEA:15149"/>
        <dbReference type="ChEBI" id="CHEBI:15379"/>
        <dbReference type="ChEBI" id="CHEBI:16240"/>
        <dbReference type="ChEBI" id="CHEBI:58589"/>
        <dbReference type="ChEBI" id="CHEBI:597326"/>
        <dbReference type="EC" id="1.4.3.5"/>
    </reaction>
</comment>
<comment type="cofactor">
    <cofactor evidence="1">
        <name>FMN</name>
        <dbReference type="ChEBI" id="CHEBI:58210"/>
    </cofactor>
    <text evidence="1">Binds 1 FMN per subunit.</text>
</comment>
<comment type="pathway">
    <text evidence="1">Cofactor metabolism; pyridoxal 5'-phosphate salvage; pyridoxal 5'-phosphate from pyridoxamine 5'-phosphate: step 1/1.</text>
</comment>
<comment type="pathway">
    <text evidence="1">Cofactor metabolism; pyridoxal 5'-phosphate salvage; pyridoxal 5'-phosphate from pyridoxine 5'-phosphate: step 1/1.</text>
</comment>
<comment type="subunit">
    <text evidence="1">Homodimer.</text>
</comment>
<comment type="similarity">
    <text evidence="1">Belongs to the pyridoxamine 5'-phosphate oxidase family.</text>
</comment>
<accession>C5BE32</accession>
<keyword id="KW-0285">Flavoprotein</keyword>
<keyword id="KW-0288">FMN</keyword>
<keyword id="KW-0560">Oxidoreductase</keyword>
<keyword id="KW-0664">Pyridoxine biosynthesis</keyword>
<evidence type="ECO:0000255" key="1">
    <source>
        <dbReference type="HAMAP-Rule" id="MF_01629"/>
    </source>
</evidence>
<gene>
    <name evidence="1" type="primary">pdxH</name>
    <name type="ordered locus">NT01EI_2097</name>
</gene>